<keyword id="KW-0156">Chromatin regulator</keyword>
<keyword id="KW-0539">Nucleus</keyword>
<keyword id="KW-1185">Reference proteome</keyword>
<keyword id="KW-0677">Repeat</keyword>
<keyword id="KW-0678">Repressor</keyword>
<keyword id="KW-0804">Transcription</keyword>
<keyword id="KW-0805">Transcription regulation</keyword>
<keyword id="KW-0853">WD repeat</keyword>
<sequence>MRIVKFPWFSHHEESRDYEIYTVDVSPDGKRVATGGLDGKIRIWSVDALVSAAAGESGVDRDTHRPLASMSRHTGSVTCVKFSPDGNYLASGSDDRILLIWAMDEENHGGSFGSEGEKEHWTVRKRLVAHDNDIQDICWAPDSSILVTVGLDRSVIVWNGLNFERLKRFDVHQSLVKGVIFDPANKYFATASDDRTMRVFRYHKTGEVSFTIEQVIVEPFIASPLTTYFRRLSWSPDGQHIAVPNATNGPVSSVAIINRGTWDSSISLIGHDAPTEVARFNPRLFKSDVEKKAKNAKDELSKDTKNNKKLESIIATAGQDKSLALWITSRPRPIFVAYDIAQKSITDMAWNPNGNILFVTSLDSSIVMLMFDANELGMPIPIEGNMEQLHRYGVDKDSFDLPESVNQLLLEDKYGTKKKQHELSSSTQSTALERRLEPNQFQKKINSREISPLKSTEKVNILIPKRKKDMKMNKVIVKDGKKRVAPTLISTAGLQPTVTNVKEVASSSGKVVKPVLKKTNDINEYSGRLSTPSIPIPRLGIHTLVMGLKERGKDKFERGAEVGPDDELREASNQITFDGESYGQDSLMKDEYRMTLNNRLTKEKVSSNEPYLRYIENTGVIADTDAVLLECGSIDDFFTLEIRNGVERAIQFDSDALFDNPTRILGYHEGQRTIEAFIPNVIISGVGSPVSKYWSLATADGFIYIISYNGQLLIPKINLGQKVVKQVVCSNYLLVLTERGLFYAWDISAKRSVIKNVSILPIINNDPVEGNRVRVNKSIRKFEFEVSEKTVIVHLTNNRSFKWLAYFGCWSEIQELVAPRETVANILLTENEIPPQSSSI</sequence>
<dbReference type="EMBL" id="CR380951">
    <property type="protein sequence ID" value="CAG58730.1"/>
    <property type="molecule type" value="Genomic_DNA"/>
</dbReference>
<dbReference type="RefSeq" id="XP_445811.1">
    <property type="nucleotide sequence ID" value="XM_445811.1"/>
</dbReference>
<dbReference type="SMR" id="Q6FVD3"/>
<dbReference type="FunCoup" id="Q6FVD3">
    <property type="interactions" value="224"/>
</dbReference>
<dbReference type="STRING" id="284593.Q6FVD3"/>
<dbReference type="EnsemblFungi" id="CAGL0E02805g-T">
    <property type="protein sequence ID" value="CAGL0E02805g-T-p1"/>
    <property type="gene ID" value="CAGL0E02805g"/>
</dbReference>
<dbReference type="KEGG" id="cgr:2887422"/>
<dbReference type="CGD" id="CAL0129108">
    <property type="gene designation" value="CAGL0E02805g"/>
</dbReference>
<dbReference type="VEuPathDB" id="FungiDB:CAGL0E02805g"/>
<dbReference type="eggNOG" id="KOG0973">
    <property type="taxonomic scope" value="Eukaryota"/>
</dbReference>
<dbReference type="HOGENOM" id="CLU_004372_3_0_1"/>
<dbReference type="InParanoid" id="Q6FVD3"/>
<dbReference type="OMA" id="KRFDVHQ"/>
<dbReference type="Proteomes" id="UP000002428">
    <property type="component" value="Chromosome E"/>
</dbReference>
<dbReference type="GO" id="GO:0000785">
    <property type="term" value="C:chromatin"/>
    <property type="evidence" value="ECO:0007669"/>
    <property type="project" value="TreeGrafter"/>
</dbReference>
<dbReference type="GO" id="GO:0000775">
    <property type="term" value="C:chromosome, centromeric region"/>
    <property type="evidence" value="ECO:0007669"/>
    <property type="project" value="EnsemblFungi"/>
</dbReference>
<dbReference type="GO" id="GO:0000417">
    <property type="term" value="C:HIR complex"/>
    <property type="evidence" value="ECO:0007669"/>
    <property type="project" value="EnsemblFungi"/>
</dbReference>
<dbReference type="GO" id="GO:0005634">
    <property type="term" value="C:nucleus"/>
    <property type="evidence" value="ECO:0007669"/>
    <property type="project" value="UniProtKB-SubCell"/>
</dbReference>
<dbReference type="GO" id="GO:0003677">
    <property type="term" value="F:DNA binding"/>
    <property type="evidence" value="ECO:0007669"/>
    <property type="project" value="EnsemblFungi"/>
</dbReference>
<dbReference type="GO" id="GO:0042802">
    <property type="term" value="F:identical protein binding"/>
    <property type="evidence" value="ECO:0007669"/>
    <property type="project" value="EnsemblFungi"/>
</dbReference>
<dbReference type="GO" id="GO:0031491">
    <property type="term" value="F:nucleosome binding"/>
    <property type="evidence" value="ECO:0007669"/>
    <property type="project" value="EnsemblFungi"/>
</dbReference>
<dbReference type="GO" id="GO:0003714">
    <property type="term" value="F:transcription corepressor activity"/>
    <property type="evidence" value="ECO:0007669"/>
    <property type="project" value="EnsemblFungi"/>
</dbReference>
<dbReference type="GO" id="GO:1905268">
    <property type="term" value="P:negative regulation of chromatin organization"/>
    <property type="evidence" value="ECO:0007669"/>
    <property type="project" value="EnsemblFungi"/>
</dbReference>
<dbReference type="GO" id="GO:0000122">
    <property type="term" value="P:negative regulation of transcription by RNA polymerase II"/>
    <property type="evidence" value="ECO:0007669"/>
    <property type="project" value="EnsemblFungi"/>
</dbReference>
<dbReference type="GO" id="GO:0016480">
    <property type="term" value="P:negative regulation of transcription by RNA polymerase III"/>
    <property type="evidence" value="ECO:0007669"/>
    <property type="project" value="EnsemblFungi"/>
</dbReference>
<dbReference type="GO" id="GO:0006334">
    <property type="term" value="P:nucleosome assembly"/>
    <property type="evidence" value="ECO:0007669"/>
    <property type="project" value="EnsemblFungi"/>
</dbReference>
<dbReference type="GO" id="GO:0006368">
    <property type="term" value="P:transcription elongation by RNA polymerase II"/>
    <property type="evidence" value="ECO:0007669"/>
    <property type="project" value="EnsemblFungi"/>
</dbReference>
<dbReference type="CDD" id="cd00200">
    <property type="entry name" value="WD40"/>
    <property type="match status" value="1"/>
</dbReference>
<dbReference type="FunFam" id="2.130.10.10:FF:000290">
    <property type="entry name" value="Protein HIR"/>
    <property type="match status" value="1"/>
</dbReference>
<dbReference type="FunFam" id="2.130.10.10:FF:001073">
    <property type="entry name" value="Protein HIR"/>
    <property type="match status" value="1"/>
</dbReference>
<dbReference type="Gene3D" id="2.130.10.10">
    <property type="entry name" value="YVTN repeat-like/Quinoprotein amine dehydrogenase"/>
    <property type="match status" value="2"/>
</dbReference>
<dbReference type="InterPro" id="IPR055410">
    <property type="entry name" value="CAF1B_HIR1_beta-prop"/>
</dbReference>
<dbReference type="InterPro" id="IPR031120">
    <property type="entry name" value="HIR1-like"/>
</dbReference>
<dbReference type="InterPro" id="IPR011494">
    <property type="entry name" value="HIRA-like_C"/>
</dbReference>
<dbReference type="InterPro" id="IPR019015">
    <property type="entry name" value="HIRA_B_motif"/>
</dbReference>
<dbReference type="InterPro" id="IPR015943">
    <property type="entry name" value="WD40/YVTN_repeat-like_dom_sf"/>
</dbReference>
<dbReference type="InterPro" id="IPR036322">
    <property type="entry name" value="WD40_repeat_dom_sf"/>
</dbReference>
<dbReference type="InterPro" id="IPR001680">
    <property type="entry name" value="WD40_rpt"/>
</dbReference>
<dbReference type="PANTHER" id="PTHR13831">
    <property type="entry name" value="MEMBER OF THE HIR1 FAMILY OF WD-REPEAT PROTEINS"/>
    <property type="match status" value="1"/>
</dbReference>
<dbReference type="PANTHER" id="PTHR13831:SF0">
    <property type="entry name" value="PROTEIN HIRA"/>
    <property type="match status" value="1"/>
</dbReference>
<dbReference type="Pfam" id="PF24105">
    <property type="entry name" value="Beta-prop_CAF1B_HIR1"/>
    <property type="match status" value="1"/>
</dbReference>
<dbReference type="Pfam" id="PF07569">
    <property type="entry name" value="Hira"/>
    <property type="match status" value="1"/>
</dbReference>
<dbReference type="Pfam" id="PF09453">
    <property type="entry name" value="HIRA_B"/>
    <property type="match status" value="1"/>
</dbReference>
<dbReference type="SMART" id="SM00320">
    <property type="entry name" value="WD40"/>
    <property type="match status" value="6"/>
</dbReference>
<dbReference type="SUPFAM" id="SSF50978">
    <property type="entry name" value="WD40 repeat-like"/>
    <property type="match status" value="1"/>
</dbReference>
<dbReference type="PROSITE" id="PS00678">
    <property type="entry name" value="WD_REPEATS_1"/>
    <property type="match status" value="1"/>
</dbReference>
<dbReference type="PROSITE" id="PS50082">
    <property type="entry name" value="WD_REPEATS_2"/>
    <property type="match status" value="4"/>
</dbReference>
<dbReference type="PROSITE" id="PS50294">
    <property type="entry name" value="WD_REPEATS_REGION"/>
    <property type="match status" value="1"/>
</dbReference>
<protein>
    <recommendedName>
        <fullName>Protein HIR1</fullName>
    </recommendedName>
</protein>
<accession>Q6FVD3</accession>
<organism>
    <name type="scientific">Candida glabrata (strain ATCC 2001 / BCRC 20586 / JCM 3761 / NBRC 0622 / NRRL Y-65 / CBS 138)</name>
    <name type="common">Yeast</name>
    <name type="synonym">Nakaseomyces glabratus</name>
    <dbReference type="NCBI Taxonomy" id="284593"/>
    <lineage>
        <taxon>Eukaryota</taxon>
        <taxon>Fungi</taxon>
        <taxon>Dikarya</taxon>
        <taxon>Ascomycota</taxon>
        <taxon>Saccharomycotina</taxon>
        <taxon>Saccharomycetes</taxon>
        <taxon>Saccharomycetales</taxon>
        <taxon>Saccharomycetaceae</taxon>
        <taxon>Nakaseomyces</taxon>
    </lineage>
</organism>
<gene>
    <name type="primary">HIR1</name>
    <name type="ordered locus">CAGL0E02805g</name>
</gene>
<feature type="chain" id="PRO_0000286406" description="Protein HIR1">
    <location>
        <begin position="1"/>
        <end position="840"/>
    </location>
</feature>
<feature type="repeat" description="WD 1">
    <location>
        <begin position="15"/>
        <end position="54"/>
    </location>
</feature>
<feature type="repeat" description="WD 2">
    <location>
        <begin position="72"/>
        <end position="111"/>
    </location>
</feature>
<feature type="repeat" description="WD 3">
    <location>
        <begin position="129"/>
        <end position="168"/>
    </location>
</feature>
<feature type="repeat" description="WD 4">
    <location>
        <begin position="171"/>
        <end position="210"/>
    </location>
</feature>
<feature type="repeat" description="WD 5">
    <location>
        <begin position="224"/>
        <end position="267"/>
    </location>
</feature>
<feature type="repeat" description="WD 6">
    <location>
        <begin position="292"/>
        <end position="336"/>
    </location>
</feature>
<feature type="repeat" description="WD 7">
    <location>
        <begin position="340"/>
        <end position="381"/>
    </location>
</feature>
<proteinExistence type="inferred from homology"/>
<reference key="1">
    <citation type="journal article" date="2004" name="Nature">
        <title>Genome evolution in yeasts.</title>
        <authorList>
            <person name="Dujon B."/>
            <person name="Sherman D."/>
            <person name="Fischer G."/>
            <person name="Durrens P."/>
            <person name="Casaregola S."/>
            <person name="Lafontaine I."/>
            <person name="de Montigny J."/>
            <person name="Marck C."/>
            <person name="Neuveglise C."/>
            <person name="Talla E."/>
            <person name="Goffard N."/>
            <person name="Frangeul L."/>
            <person name="Aigle M."/>
            <person name="Anthouard V."/>
            <person name="Babour A."/>
            <person name="Barbe V."/>
            <person name="Barnay S."/>
            <person name="Blanchin S."/>
            <person name="Beckerich J.-M."/>
            <person name="Beyne E."/>
            <person name="Bleykasten C."/>
            <person name="Boisrame A."/>
            <person name="Boyer J."/>
            <person name="Cattolico L."/>
            <person name="Confanioleri F."/>
            <person name="de Daruvar A."/>
            <person name="Despons L."/>
            <person name="Fabre E."/>
            <person name="Fairhead C."/>
            <person name="Ferry-Dumazet H."/>
            <person name="Groppi A."/>
            <person name="Hantraye F."/>
            <person name="Hennequin C."/>
            <person name="Jauniaux N."/>
            <person name="Joyet P."/>
            <person name="Kachouri R."/>
            <person name="Kerrest A."/>
            <person name="Koszul R."/>
            <person name="Lemaire M."/>
            <person name="Lesur I."/>
            <person name="Ma L."/>
            <person name="Muller H."/>
            <person name="Nicaud J.-M."/>
            <person name="Nikolski M."/>
            <person name="Oztas S."/>
            <person name="Ozier-Kalogeropoulos O."/>
            <person name="Pellenz S."/>
            <person name="Potier S."/>
            <person name="Richard G.-F."/>
            <person name="Straub M.-L."/>
            <person name="Suleau A."/>
            <person name="Swennen D."/>
            <person name="Tekaia F."/>
            <person name="Wesolowski-Louvel M."/>
            <person name="Westhof E."/>
            <person name="Wirth B."/>
            <person name="Zeniou-Meyer M."/>
            <person name="Zivanovic Y."/>
            <person name="Bolotin-Fukuhara M."/>
            <person name="Thierry A."/>
            <person name="Bouchier C."/>
            <person name="Caudron B."/>
            <person name="Scarpelli C."/>
            <person name="Gaillardin C."/>
            <person name="Weissenbach J."/>
            <person name="Wincker P."/>
            <person name="Souciet J.-L."/>
        </authorList>
    </citation>
    <scope>NUCLEOTIDE SEQUENCE [LARGE SCALE GENOMIC DNA]</scope>
    <source>
        <strain>ATCC 2001 / BCRC 20586 / JCM 3761 / NBRC 0622 / NRRL Y-65 / CBS 138</strain>
    </source>
</reference>
<evidence type="ECO:0000250" key="1"/>
<evidence type="ECO:0000305" key="2"/>
<name>HIR1_CANGA</name>
<comment type="function">
    <text evidence="1">Required for replication-independent chromatin assembly and for the periodic repression of histone gene transcription during the cell cycle.</text>
</comment>
<comment type="subcellular location">
    <subcellularLocation>
        <location evidence="1">Nucleus</location>
    </subcellularLocation>
</comment>
<comment type="similarity">
    <text evidence="2">Belongs to the WD repeat HIR1 family.</text>
</comment>